<organism>
    <name type="scientific">Homo sapiens</name>
    <name type="common">Human</name>
    <dbReference type="NCBI Taxonomy" id="9606"/>
    <lineage>
        <taxon>Eukaryota</taxon>
        <taxon>Metazoa</taxon>
        <taxon>Chordata</taxon>
        <taxon>Craniata</taxon>
        <taxon>Vertebrata</taxon>
        <taxon>Euteleostomi</taxon>
        <taxon>Mammalia</taxon>
        <taxon>Eutheria</taxon>
        <taxon>Euarchontoglires</taxon>
        <taxon>Primates</taxon>
        <taxon>Haplorrhini</taxon>
        <taxon>Catarrhini</taxon>
        <taxon>Hominidae</taxon>
        <taxon>Homo</taxon>
    </lineage>
</organism>
<proteinExistence type="evidence at protein level"/>
<accession>P35326</accession>
<accession>B2R4T3</accession>
<accession>D3DV35</accession>
<accession>Q5T529</accession>
<comment type="function">
    <text evidence="1 5 6">Gut bactericidal protein that selectively kills Gram-positive bacteria by binding to negatively charged lipids on bacterial membranes, leading to bacterial membrane permeabilization and disruption (PubMed:34735226). Specifically binds lipids bearing negatively charged headgroups, such as phosphatidic acid, phosphatidylserine (PS), cardiolipin (CL), and phosphatidylinositol phosphates, but not to zwitterionic or neutral lipids (PubMed:34735226). Induced by type-2 cytokines in response to helminth infection and is required to protect against helminth-induced bacterial invasion of intestinal tissue (By similarity). May also be involved in the development of the cornified envelope of squamous epithelia; however, additional evidences are required to confirm this result in vivo (PubMed:8325635).</text>
</comment>
<comment type="interaction">
    <interactant intactId="EBI-1047940">
        <id>P35326</id>
    </interactant>
    <interactant intactId="EBI-621482">
        <id>P12931</id>
        <label>SRC</label>
    </interactant>
    <organismsDiffer>false</organismsDiffer>
    <experiments>3</experiments>
</comment>
<comment type="subcellular location">
    <subcellularLocation>
        <location evidence="5">Secreted</location>
    </subcellularLocation>
    <subcellularLocation>
        <location evidence="5">Secreted</location>
        <location evidence="5">Extracellular space</location>
    </subcellularLocation>
    <subcellularLocation>
        <location evidence="5">Cytoplasmic vesicle</location>
        <location evidence="5">Secretory vesicle</location>
    </subcellularLocation>
    <text evidence="5">Present in intestinal secretory epithelial cells and is secreted into the intestinal lumen.</text>
</comment>
<comment type="tissue specificity">
    <text evidence="5">Expressed in intestine; selectively expressed in goblet cells.</text>
</comment>
<comment type="induction">
    <text evidence="4">During squamous differentiation of epidermal keratinocytes.</text>
</comment>
<comment type="PTM">
    <text evidence="5">Forms five pairs of intrachain disulfide bonds.</text>
</comment>
<comment type="similarity">
    <text evidence="9">Belongs to the cornifin (SPRR) family.</text>
</comment>
<keyword id="KW-0044">Antibiotic</keyword>
<keyword id="KW-0929">Antimicrobial</keyword>
<keyword id="KW-0968">Cytoplasmic vesicle</keyword>
<keyword id="KW-1015">Disulfide bond</keyword>
<keyword id="KW-0446">Lipid-binding</keyword>
<keyword id="KW-1267">Proteomics identification</keyword>
<keyword id="KW-1185">Reference proteome</keyword>
<keyword id="KW-0677">Repeat</keyword>
<keyword id="KW-0964">Secreted</keyword>
<reference key="1">
    <citation type="journal article" date="1990" name="Nucleic Acids Res.">
        <title>Characterization of the human spr2 promoter: induction after UV irradiation or TPA treatment and regulation during differentiation of cultured primary keratinocytes.</title>
        <authorList>
            <person name="Gibbs S."/>
            <person name="Lohman F."/>
            <person name="Teubel W."/>
            <person name="van de Putte P."/>
            <person name="Backendorf C."/>
        </authorList>
    </citation>
    <scope>NUCLEOTIDE SEQUENCE [GENOMIC DNA]</scope>
    <scope>INDUCTION</scope>
    <source>
        <tissue>Blood</tissue>
    </source>
</reference>
<reference key="2">
    <citation type="journal article" date="1993" name="Genomics">
        <title>Molecular characterization and evolution of the SPRR family of keratinocyte differentiation markers encoding small proline-rich proteins.</title>
        <authorList>
            <person name="Gibbs S."/>
            <person name="Fijneman R."/>
            <person name="Wiegant J."/>
            <person name="Geurts van Kessel A."/>
            <person name="van de Putte P."/>
            <person name="Backendorf C."/>
        </authorList>
    </citation>
    <scope>NUCLEOTIDE SEQUENCE [GENOMIC DNA]</scope>
    <scope>FUNCTION</scope>
</reference>
<reference key="3">
    <citation type="journal article" date="2004" name="Nat. Genet.">
        <title>Complete sequencing and characterization of 21,243 full-length human cDNAs.</title>
        <authorList>
            <person name="Ota T."/>
            <person name="Suzuki Y."/>
            <person name="Nishikawa T."/>
            <person name="Otsuki T."/>
            <person name="Sugiyama T."/>
            <person name="Irie R."/>
            <person name="Wakamatsu A."/>
            <person name="Hayashi K."/>
            <person name="Sato H."/>
            <person name="Nagai K."/>
            <person name="Kimura K."/>
            <person name="Makita H."/>
            <person name="Sekine M."/>
            <person name="Obayashi M."/>
            <person name="Nishi T."/>
            <person name="Shibahara T."/>
            <person name="Tanaka T."/>
            <person name="Ishii S."/>
            <person name="Yamamoto J."/>
            <person name="Saito K."/>
            <person name="Kawai Y."/>
            <person name="Isono Y."/>
            <person name="Nakamura Y."/>
            <person name="Nagahari K."/>
            <person name="Murakami K."/>
            <person name="Yasuda T."/>
            <person name="Iwayanagi T."/>
            <person name="Wagatsuma M."/>
            <person name="Shiratori A."/>
            <person name="Sudo H."/>
            <person name="Hosoiri T."/>
            <person name="Kaku Y."/>
            <person name="Kodaira H."/>
            <person name="Kondo H."/>
            <person name="Sugawara M."/>
            <person name="Takahashi M."/>
            <person name="Kanda K."/>
            <person name="Yokoi T."/>
            <person name="Furuya T."/>
            <person name="Kikkawa E."/>
            <person name="Omura Y."/>
            <person name="Abe K."/>
            <person name="Kamihara K."/>
            <person name="Katsuta N."/>
            <person name="Sato K."/>
            <person name="Tanikawa M."/>
            <person name="Yamazaki M."/>
            <person name="Ninomiya K."/>
            <person name="Ishibashi T."/>
            <person name="Yamashita H."/>
            <person name="Murakawa K."/>
            <person name="Fujimori K."/>
            <person name="Tanai H."/>
            <person name="Kimata M."/>
            <person name="Watanabe M."/>
            <person name="Hiraoka S."/>
            <person name="Chiba Y."/>
            <person name="Ishida S."/>
            <person name="Ono Y."/>
            <person name="Takiguchi S."/>
            <person name="Watanabe S."/>
            <person name="Yosida M."/>
            <person name="Hotuta T."/>
            <person name="Kusano J."/>
            <person name="Kanehori K."/>
            <person name="Takahashi-Fujii A."/>
            <person name="Hara H."/>
            <person name="Tanase T.-O."/>
            <person name="Nomura Y."/>
            <person name="Togiya S."/>
            <person name="Komai F."/>
            <person name="Hara R."/>
            <person name="Takeuchi K."/>
            <person name="Arita M."/>
            <person name="Imose N."/>
            <person name="Musashino K."/>
            <person name="Yuuki H."/>
            <person name="Oshima A."/>
            <person name="Sasaki N."/>
            <person name="Aotsuka S."/>
            <person name="Yoshikawa Y."/>
            <person name="Matsunawa H."/>
            <person name="Ichihara T."/>
            <person name="Shiohata N."/>
            <person name="Sano S."/>
            <person name="Moriya S."/>
            <person name="Momiyama H."/>
            <person name="Satoh N."/>
            <person name="Takami S."/>
            <person name="Terashima Y."/>
            <person name="Suzuki O."/>
            <person name="Nakagawa S."/>
            <person name="Senoh A."/>
            <person name="Mizoguchi H."/>
            <person name="Goto Y."/>
            <person name="Shimizu F."/>
            <person name="Wakebe H."/>
            <person name="Hishigaki H."/>
            <person name="Watanabe T."/>
            <person name="Sugiyama A."/>
            <person name="Takemoto M."/>
            <person name="Kawakami B."/>
            <person name="Yamazaki M."/>
            <person name="Watanabe K."/>
            <person name="Kumagai A."/>
            <person name="Itakura S."/>
            <person name="Fukuzumi Y."/>
            <person name="Fujimori Y."/>
            <person name="Komiyama M."/>
            <person name="Tashiro H."/>
            <person name="Tanigami A."/>
            <person name="Fujiwara T."/>
            <person name="Ono T."/>
            <person name="Yamada K."/>
            <person name="Fujii Y."/>
            <person name="Ozaki K."/>
            <person name="Hirao M."/>
            <person name="Ohmori Y."/>
            <person name="Kawabata A."/>
            <person name="Hikiji T."/>
            <person name="Kobatake N."/>
            <person name="Inagaki H."/>
            <person name="Ikema Y."/>
            <person name="Okamoto S."/>
            <person name="Okitani R."/>
            <person name="Kawakami T."/>
            <person name="Noguchi S."/>
            <person name="Itoh T."/>
            <person name="Shigeta K."/>
            <person name="Senba T."/>
            <person name="Matsumura K."/>
            <person name="Nakajima Y."/>
            <person name="Mizuno T."/>
            <person name="Morinaga M."/>
            <person name="Sasaki M."/>
            <person name="Togashi T."/>
            <person name="Oyama M."/>
            <person name="Hata H."/>
            <person name="Watanabe M."/>
            <person name="Komatsu T."/>
            <person name="Mizushima-Sugano J."/>
            <person name="Satoh T."/>
            <person name="Shirai Y."/>
            <person name="Takahashi Y."/>
            <person name="Nakagawa K."/>
            <person name="Okumura K."/>
            <person name="Nagase T."/>
            <person name="Nomura N."/>
            <person name="Kikuchi H."/>
            <person name="Masuho Y."/>
            <person name="Yamashita R."/>
            <person name="Nakai K."/>
            <person name="Yada T."/>
            <person name="Nakamura Y."/>
            <person name="Ohara O."/>
            <person name="Isogai T."/>
            <person name="Sugano S."/>
        </authorList>
    </citation>
    <scope>NUCLEOTIDE SEQUENCE [LARGE SCALE MRNA]</scope>
    <source>
        <tissue>Tongue</tissue>
    </source>
</reference>
<reference key="4">
    <citation type="journal article" date="2006" name="Nature">
        <title>The DNA sequence and biological annotation of human chromosome 1.</title>
        <authorList>
            <person name="Gregory S.G."/>
            <person name="Barlow K.F."/>
            <person name="McLay K.E."/>
            <person name="Kaul R."/>
            <person name="Swarbreck D."/>
            <person name="Dunham A."/>
            <person name="Scott C.E."/>
            <person name="Howe K.L."/>
            <person name="Woodfine K."/>
            <person name="Spencer C.C.A."/>
            <person name="Jones M.C."/>
            <person name="Gillson C."/>
            <person name="Searle S."/>
            <person name="Zhou Y."/>
            <person name="Kokocinski F."/>
            <person name="McDonald L."/>
            <person name="Evans R."/>
            <person name="Phillips K."/>
            <person name="Atkinson A."/>
            <person name="Cooper R."/>
            <person name="Jones C."/>
            <person name="Hall R.E."/>
            <person name="Andrews T.D."/>
            <person name="Lloyd C."/>
            <person name="Ainscough R."/>
            <person name="Almeida J.P."/>
            <person name="Ambrose K.D."/>
            <person name="Anderson F."/>
            <person name="Andrew R.W."/>
            <person name="Ashwell R.I.S."/>
            <person name="Aubin K."/>
            <person name="Babbage A.K."/>
            <person name="Bagguley C.L."/>
            <person name="Bailey J."/>
            <person name="Beasley H."/>
            <person name="Bethel G."/>
            <person name="Bird C.P."/>
            <person name="Bray-Allen S."/>
            <person name="Brown J.Y."/>
            <person name="Brown A.J."/>
            <person name="Buckley D."/>
            <person name="Burton J."/>
            <person name="Bye J."/>
            <person name="Carder C."/>
            <person name="Chapman J.C."/>
            <person name="Clark S.Y."/>
            <person name="Clarke G."/>
            <person name="Clee C."/>
            <person name="Cobley V."/>
            <person name="Collier R.E."/>
            <person name="Corby N."/>
            <person name="Coville G.J."/>
            <person name="Davies J."/>
            <person name="Deadman R."/>
            <person name="Dunn M."/>
            <person name="Earthrowl M."/>
            <person name="Ellington A.G."/>
            <person name="Errington H."/>
            <person name="Frankish A."/>
            <person name="Frankland J."/>
            <person name="French L."/>
            <person name="Garner P."/>
            <person name="Garnett J."/>
            <person name="Gay L."/>
            <person name="Ghori M.R.J."/>
            <person name="Gibson R."/>
            <person name="Gilby L.M."/>
            <person name="Gillett W."/>
            <person name="Glithero R.J."/>
            <person name="Grafham D.V."/>
            <person name="Griffiths C."/>
            <person name="Griffiths-Jones S."/>
            <person name="Grocock R."/>
            <person name="Hammond S."/>
            <person name="Harrison E.S.I."/>
            <person name="Hart E."/>
            <person name="Haugen E."/>
            <person name="Heath P.D."/>
            <person name="Holmes S."/>
            <person name="Holt K."/>
            <person name="Howden P.J."/>
            <person name="Hunt A.R."/>
            <person name="Hunt S.E."/>
            <person name="Hunter G."/>
            <person name="Isherwood J."/>
            <person name="James R."/>
            <person name="Johnson C."/>
            <person name="Johnson D."/>
            <person name="Joy A."/>
            <person name="Kay M."/>
            <person name="Kershaw J.K."/>
            <person name="Kibukawa M."/>
            <person name="Kimberley A.M."/>
            <person name="King A."/>
            <person name="Knights A.J."/>
            <person name="Lad H."/>
            <person name="Laird G."/>
            <person name="Lawlor S."/>
            <person name="Leongamornlert D.A."/>
            <person name="Lloyd D.M."/>
            <person name="Loveland J."/>
            <person name="Lovell J."/>
            <person name="Lush M.J."/>
            <person name="Lyne R."/>
            <person name="Martin S."/>
            <person name="Mashreghi-Mohammadi M."/>
            <person name="Matthews L."/>
            <person name="Matthews N.S.W."/>
            <person name="McLaren S."/>
            <person name="Milne S."/>
            <person name="Mistry S."/>
            <person name="Moore M.J.F."/>
            <person name="Nickerson T."/>
            <person name="O'Dell C.N."/>
            <person name="Oliver K."/>
            <person name="Palmeiri A."/>
            <person name="Palmer S.A."/>
            <person name="Parker A."/>
            <person name="Patel D."/>
            <person name="Pearce A.V."/>
            <person name="Peck A.I."/>
            <person name="Pelan S."/>
            <person name="Phelps K."/>
            <person name="Phillimore B.J."/>
            <person name="Plumb R."/>
            <person name="Rajan J."/>
            <person name="Raymond C."/>
            <person name="Rouse G."/>
            <person name="Saenphimmachak C."/>
            <person name="Sehra H.K."/>
            <person name="Sheridan E."/>
            <person name="Shownkeen R."/>
            <person name="Sims S."/>
            <person name="Skuce C.D."/>
            <person name="Smith M."/>
            <person name="Steward C."/>
            <person name="Subramanian S."/>
            <person name="Sycamore N."/>
            <person name="Tracey A."/>
            <person name="Tromans A."/>
            <person name="Van Helmond Z."/>
            <person name="Wall M."/>
            <person name="Wallis J.M."/>
            <person name="White S."/>
            <person name="Whitehead S.L."/>
            <person name="Wilkinson J.E."/>
            <person name="Willey D.L."/>
            <person name="Williams H."/>
            <person name="Wilming L."/>
            <person name="Wray P.W."/>
            <person name="Wu Z."/>
            <person name="Coulson A."/>
            <person name="Vaudin M."/>
            <person name="Sulston J.E."/>
            <person name="Durbin R.M."/>
            <person name="Hubbard T."/>
            <person name="Wooster R."/>
            <person name="Dunham I."/>
            <person name="Carter N.P."/>
            <person name="McVean G."/>
            <person name="Ross M.T."/>
            <person name="Harrow J."/>
            <person name="Olson M.V."/>
            <person name="Beck S."/>
            <person name="Rogers J."/>
            <person name="Bentley D.R."/>
        </authorList>
    </citation>
    <scope>NUCLEOTIDE SEQUENCE [LARGE SCALE GENOMIC DNA]</scope>
</reference>
<reference key="5">
    <citation type="submission" date="2005-09" db="EMBL/GenBank/DDBJ databases">
        <authorList>
            <person name="Mural R.J."/>
            <person name="Istrail S."/>
            <person name="Sutton G.G."/>
            <person name="Florea L."/>
            <person name="Halpern A.L."/>
            <person name="Mobarry C.M."/>
            <person name="Lippert R."/>
            <person name="Walenz B."/>
            <person name="Shatkay H."/>
            <person name="Dew I."/>
            <person name="Miller J.R."/>
            <person name="Flanigan M.J."/>
            <person name="Edwards N.J."/>
            <person name="Bolanos R."/>
            <person name="Fasulo D."/>
            <person name="Halldorsson B.V."/>
            <person name="Hannenhalli S."/>
            <person name="Turner R."/>
            <person name="Yooseph S."/>
            <person name="Lu F."/>
            <person name="Nusskern D.R."/>
            <person name="Shue B.C."/>
            <person name="Zheng X.H."/>
            <person name="Zhong F."/>
            <person name="Delcher A.L."/>
            <person name="Huson D.H."/>
            <person name="Kravitz S.A."/>
            <person name="Mouchard L."/>
            <person name="Reinert K."/>
            <person name="Remington K.A."/>
            <person name="Clark A.G."/>
            <person name="Waterman M.S."/>
            <person name="Eichler E.E."/>
            <person name="Adams M.D."/>
            <person name="Hunkapiller M.W."/>
            <person name="Myers E.W."/>
            <person name="Venter J.C."/>
        </authorList>
    </citation>
    <scope>NUCLEOTIDE SEQUENCE [LARGE SCALE GENOMIC DNA]</scope>
</reference>
<reference key="6">
    <citation type="journal article" date="2004" name="Genome Res.">
        <title>The status, quality, and expansion of the NIH full-length cDNA project: the Mammalian Gene Collection (MGC).</title>
        <authorList>
            <consortium name="The MGC Project Team"/>
        </authorList>
    </citation>
    <scope>NUCLEOTIDE SEQUENCE [LARGE SCALE MRNA]</scope>
</reference>
<reference key="7">
    <citation type="journal article" date="2021" name="Science">
        <title>Small proline-rich protein 2A is a gut bactericidal protein deployed during helminth infection.</title>
        <authorList>
            <person name="Hu Z."/>
            <person name="Zhang C."/>
            <person name="Sifuentes-Dominguez L."/>
            <person name="Zarek C.M."/>
            <person name="Propheter D.C."/>
            <person name="Kuang Z."/>
            <person name="Wang Y."/>
            <person name="Pendse M."/>
            <person name="Ruhn K.A."/>
            <person name="Hassell B."/>
            <person name="Behrendt C.L."/>
            <person name="Zhang B."/>
            <person name="Raj P."/>
            <person name="Harris-Tryon T.A."/>
            <person name="Reese T.A."/>
            <person name="Hooper L.V."/>
        </authorList>
    </citation>
    <scope>FUNCTION</scope>
    <scope>SUBCELLULAR LOCATION</scope>
    <scope>DISULFIDE BONDS</scope>
    <scope>TISSUE SPECIFICITY</scope>
</reference>
<sequence>MSYQQQQCKQPCQPPPVCPTPKCPEPCPPPKCPEPCPPPKCPQPCPPQQCQQKYPPVTPSPPCQSKYPPKSK</sequence>
<dbReference type="EMBL" id="X53064">
    <property type="protein sequence ID" value="CAA37239.1"/>
    <property type="molecule type" value="Genomic_DNA"/>
</dbReference>
<dbReference type="EMBL" id="AL356867">
    <property type="status" value="NOT_ANNOTATED_CDS"/>
    <property type="molecule type" value="Genomic_DNA"/>
</dbReference>
<dbReference type="EMBL" id="AK311939">
    <property type="protein sequence ID" value="BAG34880.1"/>
    <property type="molecule type" value="mRNA"/>
</dbReference>
<dbReference type="EMBL" id="CH471121">
    <property type="protein sequence ID" value="EAW53346.1"/>
    <property type="molecule type" value="Genomic_DNA"/>
</dbReference>
<dbReference type="EMBL" id="CH471121">
    <property type="protein sequence ID" value="EAW53347.1"/>
    <property type="molecule type" value="Genomic_DNA"/>
</dbReference>
<dbReference type="EMBL" id="BC096108">
    <property type="protein sequence ID" value="AAH96108.1"/>
    <property type="molecule type" value="mRNA"/>
</dbReference>
<dbReference type="EMBL" id="BC096109">
    <property type="protein sequence ID" value="AAH96109.1"/>
    <property type="molecule type" value="mRNA"/>
</dbReference>
<dbReference type="EMBL" id="BC096110">
    <property type="protein sequence ID" value="AAH96110.1"/>
    <property type="molecule type" value="mRNA"/>
</dbReference>
<dbReference type="EMBL" id="BC096111">
    <property type="protein sequence ID" value="AAH96111.1"/>
    <property type="molecule type" value="mRNA"/>
</dbReference>
<dbReference type="EMBL" id="BC128049">
    <property type="protein sequence ID" value="AAI28050.1"/>
    <property type="molecule type" value="mRNA"/>
</dbReference>
<dbReference type="CCDS" id="CCDS1034.1"/>
<dbReference type="PIR" id="S12712">
    <property type="entry name" value="S12712"/>
</dbReference>
<dbReference type="RefSeq" id="NP_005979.1">
    <property type="nucleotide sequence ID" value="NM_005988.3"/>
</dbReference>
<dbReference type="BioGRID" id="112578">
    <property type="interactions" value="20"/>
</dbReference>
<dbReference type="FunCoup" id="P35326">
    <property type="interactions" value="97"/>
</dbReference>
<dbReference type="IntAct" id="P35326">
    <property type="interactions" value="17"/>
</dbReference>
<dbReference type="MINT" id="P35326"/>
<dbReference type="STRING" id="9606.ENSP00000357744"/>
<dbReference type="GlyGen" id="P35326">
    <property type="glycosylation" value="3 sites"/>
</dbReference>
<dbReference type="iPTMnet" id="P35326"/>
<dbReference type="PhosphoSitePlus" id="P35326"/>
<dbReference type="SwissPalm" id="P35326"/>
<dbReference type="BioMuta" id="SPRR2A"/>
<dbReference type="jPOST" id="P35326"/>
<dbReference type="MassIVE" id="P35326"/>
<dbReference type="PaxDb" id="9606-ENSP00000357744"/>
<dbReference type="PeptideAtlas" id="P35326"/>
<dbReference type="ProteomicsDB" id="55024"/>
<dbReference type="Pumba" id="P35326"/>
<dbReference type="Antibodypedia" id="54240">
    <property type="antibodies" value="129 antibodies from 18 providers"/>
</dbReference>
<dbReference type="DNASU" id="6700"/>
<dbReference type="Ensembl" id="ENST00000392653.3">
    <property type="protein sequence ID" value="ENSP00000376423.2"/>
    <property type="gene ID" value="ENSG00000241794.2"/>
</dbReference>
<dbReference type="GeneID" id="6700"/>
<dbReference type="KEGG" id="hsa:6700"/>
<dbReference type="MANE-Select" id="ENST00000392653.3">
    <property type="protein sequence ID" value="ENSP00000376423.2"/>
    <property type="RefSeq nucleotide sequence ID" value="NM_005988.3"/>
    <property type="RefSeq protein sequence ID" value="NP_005979.1"/>
</dbReference>
<dbReference type="UCSC" id="uc001fbd.4">
    <property type="organism name" value="human"/>
</dbReference>
<dbReference type="AGR" id="HGNC:11261"/>
<dbReference type="CTD" id="6700"/>
<dbReference type="DisGeNET" id="6700"/>
<dbReference type="GeneCards" id="SPRR2A"/>
<dbReference type="HGNC" id="HGNC:11261">
    <property type="gene designation" value="SPRR2A"/>
</dbReference>
<dbReference type="HPA" id="ENSG00000241794">
    <property type="expression patterns" value="Tissue enriched (esophagus)"/>
</dbReference>
<dbReference type="MIM" id="182267">
    <property type="type" value="gene"/>
</dbReference>
<dbReference type="neXtProt" id="NX_P35326"/>
<dbReference type="OpenTargets" id="ENSG00000241794"/>
<dbReference type="PharmGKB" id="PA36090"/>
<dbReference type="VEuPathDB" id="HostDB:ENSG00000241794"/>
<dbReference type="eggNOG" id="ENOG502TEHF">
    <property type="taxonomic scope" value="Eukaryota"/>
</dbReference>
<dbReference type="GeneTree" id="ENSGT01060000249097"/>
<dbReference type="HOGENOM" id="CLU_192372_0_0_1"/>
<dbReference type="InParanoid" id="P35326"/>
<dbReference type="OMA" id="CPPQHYR"/>
<dbReference type="PAN-GO" id="P35326">
    <property type="GO annotations" value="3 GO annotations based on evolutionary models"/>
</dbReference>
<dbReference type="PathwayCommons" id="P35326"/>
<dbReference type="Reactome" id="R-HSA-6809371">
    <property type="pathway name" value="Formation of the cornified envelope"/>
</dbReference>
<dbReference type="Reactome" id="R-HSA-9725554">
    <property type="pathway name" value="Differentiation of Keratinocytes in Interfollicular Epidermis in Mammalian Skin"/>
</dbReference>
<dbReference type="SignaLink" id="P35326"/>
<dbReference type="SIGNOR" id="P35326"/>
<dbReference type="BioGRID-ORCS" id="6700">
    <property type="hits" value="16 hits in 307 CRISPR screens"/>
</dbReference>
<dbReference type="ChiTaRS" id="SPRR2A">
    <property type="organism name" value="human"/>
</dbReference>
<dbReference type="GeneWiki" id="SPRR2A"/>
<dbReference type="GenomeRNAi" id="6700"/>
<dbReference type="Pharos" id="P35326">
    <property type="development level" value="Tbio"/>
</dbReference>
<dbReference type="PRO" id="PR:P35326"/>
<dbReference type="Proteomes" id="UP000005640">
    <property type="component" value="Chromosome 1"/>
</dbReference>
<dbReference type="RNAct" id="P35326">
    <property type="molecule type" value="protein"/>
</dbReference>
<dbReference type="Bgee" id="ENSG00000241794">
    <property type="expression patterns" value="Expressed in buccal mucosa cell and 95 other cell types or tissues"/>
</dbReference>
<dbReference type="GO" id="GO:0001533">
    <property type="term" value="C:cornified envelope"/>
    <property type="evidence" value="ECO:0000304"/>
    <property type="project" value="Reactome"/>
</dbReference>
<dbReference type="GO" id="GO:0005737">
    <property type="term" value="C:cytoplasm"/>
    <property type="evidence" value="ECO:0000314"/>
    <property type="project" value="UniProtKB"/>
</dbReference>
<dbReference type="GO" id="GO:0005829">
    <property type="term" value="C:cytosol"/>
    <property type="evidence" value="ECO:0000304"/>
    <property type="project" value="Reactome"/>
</dbReference>
<dbReference type="GO" id="GO:0005576">
    <property type="term" value="C:extracellular region"/>
    <property type="evidence" value="ECO:0000314"/>
    <property type="project" value="UniProtKB"/>
</dbReference>
<dbReference type="GO" id="GO:0030141">
    <property type="term" value="C:secretory granule"/>
    <property type="evidence" value="ECO:0000314"/>
    <property type="project" value="UniProtKB"/>
</dbReference>
<dbReference type="GO" id="GO:0030133">
    <property type="term" value="C:transport vesicle"/>
    <property type="evidence" value="ECO:0007669"/>
    <property type="project" value="UniProtKB-SubCell"/>
</dbReference>
<dbReference type="GO" id="GO:0008289">
    <property type="term" value="F:lipid binding"/>
    <property type="evidence" value="ECO:0000314"/>
    <property type="project" value="UniProtKB"/>
</dbReference>
<dbReference type="GO" id="GO:0019731">
    <property type="term" value="P:antibacterial humoral response"/>
    <property type="evidence" value="ECO:0000314"/>
    <property type="project" value="UniProtKB"/>
</dbReference>
<dbReference type="GO" id="GO:0050830">
    <property type="term" value="P:defense response to Gram-positive bacterium"/>
    <property type="evidence" value="ECO:0000314"/>
    <property type="project" value="UniProtKB"/>
</dbReference>
<dbReference type="GO" id="GO:0048874">
    <property type="term" value="P:host-mediated regulation of intestinal microbiota composition"/>
    <property type="evidence" value="ECO:0000250"/>
    <property type="project" value="UniProtKB"/>
</dbReference>
<dbReference type="InterPro" id="IPR029142">
    <property type="entry name" value="SPRR2"/>
</dbReference>
<dbReference type="Pfam" id="PF14820">
    <property type="entry name" value="SPRR2"/>
    <property type="match status" value="1"/>
</dbReference>
<dbReference type="PRINTS" id="PR01217">
    <property type="entry name" value="PRICHEXTENSN"/>
</dbReference>
<dbReference type="PRINTS" id="PR00021">
    <property type="entry name" value="PRORICH"/>
</dbReference>
<gene>
    <name evidence="8 10" type="primary">SPRR2A</name>
</gene>
<name>SPR2A_HUMAN</name>
<protein>
    <recommendedName>
        <fullName evidence="9">Small proline-rich protein 2A</fullName>
        <shortName evidence="7">SPR-2A</shortName>
    </recommendedName>
    <alternativeName>
        <fullName evidence="7">2-1</fullName>
    </alternativeName>
</protein>
<evidence type="ECO:0000250" key="1">
    <source>
        <dbReference type="UniProtKB" id="P0DV37"/>
    </source>
</evidence>
<evidence type="ECO:0000255" key="2"/>
<evidence type="ECO:0000256" key="3">
    <source>
        <dbReference type="SAM" id="MobiDB-lite"/>
    </source>
</evidence>
<evidence type="ECO:0000269" key="4">
    <source>
    </source>
</evidence>
<evidence type="ECO:0000269" key="5">
    <source>
    </source>
</evidence>
<evidence type="ECO:0000269" key="6">
    <source>
    </source>
</evidence>
<evidence type="ECO:0000303" key="7">
    <source>
    </source>
</evidence>
<evidence type="ECO:0000303" key="8">
    <source>
    </source>
</evidence>
<evidence type="ECO:0000305" key="9"/>
<evidence type="ECO:0000312" key="10">
    <source>
        <dbReference type="HGNC" id="HGNC:11261"/>
    </source>
</evidence>
<feature type="chain" id="PRO_0000150008" description="Small proline-rich protein 2A">
    <location>
        <begin position="1"/>
        <end position="72"/>
    </location>
</feature>
<feature type="repeat" description="1" evidence="2">
    <location>
        <begin position="21"/>
        <end position="29"/>
    </location>
</feature>
<feature type="repeat" description="2" evidence="2">
    <location>
        <begin position="30"/>
        <end position="38"/>
    </location>
</feature>
<feature type="repeat" description="3" evidence="2">
    <location>
        <begin position="39"/>
        <end position="47"/>
    </location>
</feature>
<feature type="region of interest" description="Disordered" evidence="3">
    <location>
        <begin position="1"/>
        <end position="20"/>
    </location>
</feature>
<feature type="region of interest" description="3 X 9 AA tandem repeats of P-K-C-P-[EQ]-P-C-P-P" evidence="2">
    <location>
        <begin position="21"/>
        <end position="47"/>
    </location>
</feature>
<feature type="region of interest" description="Disordered" evidence="3">
    <location>
        <begin position="42"/>
        <end position="72"/>
    </location>
</feature>
<feature type="compositionally biased region" description="Low complexity" evidence="3">
    <location>
        <begin position="1"/>
        <end position="11"/>
    </location>
</feature>